<feature type="chain" id="PRO_0000204639" description="F-actin-capping protein subunit beta">
    <location>
        <begin position="1"/>
        <end position="276"/>
    </location>
</feature>
<protein>
    <recommendedName>
        <fullName>F-actin-capping protein subunit beta</fullName>
    </recommendedName>
</protein>
<evidence type="ECO:0000250" key="1">
    <source>
        <dbReference type="UniProtKB" id="A9XFX6"/>
    </source>
</evidence>
<evidence type="ECO:0000269" key="2">
    <source>
    </source>
</evidence>
<evidence type="ECO:0000305" key="3"/>
<gene>
    <name type="primary">cpb</name>
    <name type="synonym">ANCP-BETA</name>
    <name type="ORF">CG17158</name>
</gene>
<dbReference type="EMBL" id="U35240">
    <property type="protein sequence ID" value="AAB38521.1"/>
    <property type="molecule type" value="mRNA"/>
</dbReference>
<dbReference type="EMBL" id="AE014134">
    <property type="protein sequence ID" value="AAF51349.1"/>
    <property type="molecule type" value="Genomic_DNA"/>
</dbReference>
<dbReference type="EMBL" id="AY069829">
    <property type="protein sequence ID" value="AAL39974.1"/>
    <property type="molecule type" value="mRNA"/>
</dbReference>
<dbReference type="RefSeq" id="NP_001259877.1">
    <property type="nucleotide sequence ID" value="NM_001272948.1"/>
</dbReference>
<dbReference type="RefSeq" id="NP_477005.1">
    <property type="nucleotide sequence ID" value="NM_057657.5"/>
</dbReference>
<dbReference type="SMR" id="P48603"/>
<dbReference type="BioGRID" id="59586">
    <property type="interactions" value="57"/>
</dbReference>
<dbReference type="ComplexPortal" id="CPX-2434">
    <property type="entry name" value="Dynactin complex"/>
</dbReference>
<dbReference type="ComplexPortal" id="CPX-2828">
    <property type="entry name" value="F-actin capping protein complex"/>
</dbReference>
<dbReference type="DIP" id="DIP-17681N"/>
<dbReference type="FunCoup" id="P48603">
    <property type="interactions" value="2053"/>
</dbReference>
<dbReference type="IntAct" id="P48603">
    <property type="interactions" value="73"/>
</dbReference>
<dbReference type="STRING" id="7227.FBpp0304020"/>
<dbReference type="PaxDb" id="7227-FBpp0077549"/>
<dbReference type="DNASU" id="33346"/>
<dbReference type="EnsemblMetazoa" id="FBtr0077881">
    <property type="protein sequence ID" value="FBpp0077549"/>
    <property type="gene ID" value="FBgn0011570"/>
</dbReference>
<dbReference type="EnsemblMetazoa" id="FBtr0331630">
    <property type="protein sequence ID" value="FBpp0304020"/>
    <property type="gene ID" value="FBgn0011570"/>
</dbReference>
<dbReference type="GeneID" id="33346"/>
<dbReference type="KEGG" id="dme:Dmel_CG17158"/>
<dbReference type="AGR" id="FB:FBgn0011570"/>
<dbReference type="CTD" id="33346"/>
<dbReference type="FlyBase" id="FBgn0011570">
    <property type="gene designation" value="cpb"/>
</dbReference>
<dbReference type="VEuPathDB" id="VectorBase:FBgn0011570"/>
<dbReference type="eggNOG" id="KOG3174">
    <property type="taxonomic scope" value="Eukaryota"/>
</dbReference>
<dbReference type="GeneTree" id="ENSGT00390000017957"/>
<dbReference type="HOGENOM" id="CLU_045864_1_1_1"/>
<dbReference type="InParanoid" id="P48603"/>
<dbReference type="OMA" id="WSNKYYP"/>
<dbReference type="OrthoDB" id="9979678at2759"/>
<dbReference type="PhylomeDB" id="P48603"/>
<dbReference type="Reactome" id="R-DME-3371497">
    <property type="pathway name" value="HSP90 chaperone cycle for steroid hormone receptors (SHR) in the presence of ligand"/>
</dbReference>
<dbReference type="Reactome" id="R-DME-6807878">
    <property type="pathway name" value="COPI-mediated anterograde transport"/>
</dbReference>
<dbReference type="Reactome" id="R-DME-6811436">
    <property type="pathway name" value="COPI-independent Golgi-to-ER retrograde traffic"/>
</dbReference>
<dbReference type="Reactome" id="R-DME-9013405">
    <property type="pathway name" value="RHOD GTPase cycle"/>
</dbReference>
<dbReference type="Reactome" id="R-DME-9035034">
    <property type="pathway name" value="RHOF GTPase cycle"/>
</dbReference>
<dbReference type="Reactome" id="R-DME-983231">
    <property type="pathway name" value="Factors involved in megakaryocyte development and platelet production"/>
</dbReference>
<dbReference type="SignaLink" id="P48603"/>
<dbReference type="BioGRID-ORCS" id="33346">
    <property type="hits" value="0 hits in 1 CRISPR screen"/>
</dbReference>
<dbReference type="GenomeRNAi" id="33346"/>
<dbReference type="PRO" id="PR:P48603"/>
<dbReference type="Proteomes" id="UP000000803">
    <property type="component" value="Chromosome 2L"/>
</dbReference>
<dbReference type="Bgee" id="FBgn0011570">
    <property type="expression patterns" value="Expressed in adult posterior midgut class II enteroendocrine cell in adult midgut (Drosophila) and 162 other cell types or tissues"/>
</dbReference>
<dbReference type="ExpressionAtlas" id="P48603">
    <property type="expression patterns" value="baseline and differential"/>
</dbReference>
<dbReference type="GO" id="GO:0005869">
    <property type="term" value="C:dynactin complex"/>
    <property type="evidence" value="ECO:0000250"/>
    <property type="project" value="FlyBase"/>
</dbReference>
<dbReference type="GO" id="GO:0008290">
    <property type="term" value="C:F-actin capping protein complex"/>
    <property type="evidence" value="ECO:0000314"/>
    <property type="project" value="FlyBase"/>
</dbReference>
<dbReference type="GO" id="GO:0071203">
    <property type="term" value="C:WASH complex"/>
    <property type="evidence" value="ECO:0000250"/>
    <property type="project" value="FlyBase"/>
</dbReference>
<dbReference type="GO" id="GO:0051015">
    <property type="term" value="F:actin filament binding"/>
    <property type="evidence" value="ECO:0000318"/>
    <property type="project" value="GO_Central"/>
</dbReference>
<dbReference type="GO" id="GO:0046982">
    <property type="term" value="F:protein heterodimerization activity"/>
    <property type="evidence" value="ECO:0000353"/>
    <property type="project" value="FlyBase"/>
</dbReference>
<dbReference type="GO" id="GO:0030036">
    <property type="term" value="P:actin cytoskeleton organization"/>
    <property type="evidence" value="ECO:0000315"/>
    <property type="project" value="FlyBase"/>
</dbReference>
<dbReference type="GO" id="GO:0007015">
    <property type="term" value="P:actin filament organization"/>
    <property type="evidence" value="ECO:0000315"/>
    <property type="project" value="FlyBase"/>
</dbReference>
<dbReference type="GO" id="GO:0051016">
    <property type="term" value="P:barbed-end actin filament capping"/>
    <property type="evidence" value="ECO:0000314"/>
    <property type="project" value="FlyBase"/>
</dbReference>
<dbReference type="GO" id="GO:0007298">
    <property type="term" value="P:border follicle cell migration"/>
    <property type="evidence" value="ECO:0000315"/>
    <property type="project" value="FlyBase"/>
</dbReference>
<dbReference type="GO" id="GO:0000902">
    <property type="term" value="P:cell morphogenesis"/>
    <property type="evidence" value="ECO:0000318"/>
    <property type="project" value="GO_Central"/>
</dbReference>
<dbReference type="GO" id="GO:0007018">
    <property type="term" value="P:microtubule-based movement"/>
    <property type="evidence" value="ECO:0000305"/>
    <property type="project" value="FlyBase"/>
</dbReference>
<dbReference type="GO" id="GO:0051490">
    <property type="term" value="P:negative regulation of filopodium assembly"/>
    <property type="evidence" value="ECO:0000315"/>
    <property type="project" value="FlyBase"/>
</dbReference>
<dbReference type="GO" id="GO:0046329">
    <property type="term" value="P:negative regulation of JNK cascade"/>
    <property type="evidence" value="ECO:0000316"/>
    <property type="project" value="FlyBase"/>
</dbReference>
<dbReference type="GO" id="GO:0140591">
    <property type="term" value="P:nuclear envelope budding"/>
    <property type="evidence" value="ECO:0000315"/>
    <property type="project" value="FlyBase"/>
</dbReference>
<dbReference type="GO" id="GO:0007300">
    <property type="term" value="P:ovarian nurse cell to oocyte transport"/>
    <property type="evidence" value="ECO:0000315"/>
    <property type="project" value="FlyBase"/>
</dbReference>
<dbReference type="GO" id="GO:0045887">
    <property type="term" value="P:positive regulation of synaptic assembly at neuromuscular junction"/>
    <property type="evidence" value="ECO:0000315"/>
    <property type="project" value="FlyBase"/>
</dbReference>
<dbReference type="GO" id="GO:0030832">
    <property type="term" value="P:regulation of actin filament length"/>
    <property type="evidence" value="ECO:0000315"/>
    <property type="project" value="FlyBase"/>
</dbReference>
<dbReference type="GO" id="GO:0010591">
    <property type="term" value="P:regulation of lamellipodium assembly"/>
    <property type="evidence" value="ECO:0000315"/>
    <property type="project" value="FlyBase"/>
</dbReference>
<dbReference type="GO" id="GO:0035220">
    <property type="term" value="P:wing disc development"/>
    <property type="evidence" value="ECO:0000315"/>
    <property type="project" value="FlyBase"/>
</dbReference>
<dbReference type="FunFam" id="1.20.58.570:FF:000001">
    <property type="entry name" value="F-actin-capping protein subunit beta"/>
    <property type="match status" value="1"/>
</dbReference>
<dbReference type="FunFam" id="3.90.1150.210:FF:000001">
    <property type="entry name" value="F-actin-capping protein subunit beta"/>
    <property type="match status" value="1"/>
</dbReference>
<dbReference type="Gene3D" id="1.20.58.570">
    <property type="match status" value="1"/>
</dbReference>
<dbReference type="Gene3D" id="3.90.1150.210">
    <property type="entry name" value="F-actin capping protein, beta subunit"/>
    <property type="match status" value="1"/>
</dbReference>
<dbReference type="InterPro" id="IPR037282">
    <property type="entry name" value="CapZ_alpha/beta"/>
</dbReference>
<dbReference type="InterPro" id="IPR042276">
    <property type="entry name" value="CapZ_alpha/beta_2"/>
</dbReference>
<dbReference type="InterPro" id="IPR001698">
    <property type="entry name" value="CAPZB"/>
</dbReference>
<dbReference type="InterPro" id="IPR043175">
    <property type="entry name" value="CAPZB_N"/>
</dbReference>
<dbReference type="InterPro" id="IPR019771">
    <property type="entry name" value="F-actin_capping_bsu_CS"/>
</dbReference>
<dbReference type="PANTHER" id="PTHR10619">
    <property type="entry name" value="F-ACTIN-CAPPING PROTEIN SUBUNIT BETA"/>
    <property type="match status" value="1"/>
</dbReference>
<dbReference type="PANTHER" id="PTHR10619:SF0">
    <property type="entry name" value="F-ACTIN-CAPPING PROTEIN SUBUNIT BETA ISOFORMS 1 AND 2"/>
    <property type="match status" value="1"/>
</dbReference>
<dbReference type="Pfam" id="PF01115">
    <property type="entry name" value="F_actin_cap_B"/>
    <property type="match status" value="1"/>
</dbReference>
<dbReference type="PRINTS" id="PR00192">
    <property type="entry name" value="FACTINCAPB"/>
</dbReference>
<dbReference type="SUPFAM" id="SSF90096">
    <property type="entry name" value="Subunits of heterodimeric actin filament capping protein Capz"/>
    <property type="match status" value="1"/>
</dbReference>
<dbReference type="PROSITE" id="PS00231">
    <property type="entry name" value="F_ACTIN_CAPPING_BETA"/>
    <property type="match status" value="1"/>
</dbReference>
<keyword id="KW-0117">Actin capping</keyword>
<keyword id="KW-0009">Actin-binding</keyword>
<keyword id="KW-0963">Cytoplasm</keyword>
<keyword id="KW-0206">Cytoskeleton</keyword>
<keyword id="KW-1185">Reference proteome</keyword>
<reference key="1">
    <citation type="journal article" date="1996" name="J. Cell Biol.">
        <title>Actin organization, bristle morphology, and viability are affected by actin capping protein mutations in Drosophila.</title>
        <authorList>
            <person name="Hopmann R."/>
            <person name="Cooper J.A."/>
            <person name="Miller K.G."/>
        </authorList>
    </citation>
    <scope>NUCLEOTIDE SEQUENCE [MRNA]</scope>
    <scope>FUNCTION</scope>
</reference>
<reference key="2">
    <citation type="journal article" date="2000" name="Science">
        <title>The genome sequence of Drosophila melanogaster.</title>
        <authorList>
            <person name="Adams M.D."/>
            <person name="Celniker S.E."/>
            <person name="Holt R.A."/>
            <person name="Evans C.A."/>
            <person name="Gocayne J.D."/>
            <person name="Amanatides P.G."/>
            <person name="Scherer S.E."/>
            <person name="Li P.W."/>
            <person name="Hoskins R.A."/>
            <person name="Galle R.F."/>
            <person name="George R.A."/>
            <person name="Lewis S.E."/>
            <person name="Richards S."/>
            <person name="Ashburner M."/>
            <person name="Henderson S.N."/>
            <person name="Sutton G.G."/>
            <person name="Wortman J.R."/>
            <person name="Yandell M.D."/>
            <person name="Zhang Q."/>
            <person name="Chen L.X."/>
            <person name="Brandon R.C."/>
            <person name="Rogers Y.-H.C."/>
            <person name="Blazej R.G."/>
            <person name="Champe M."/>
            <person name="Pfeiffer B.D."/>
            <person name="Wan K.H."/>
            <person name="Doyle C."/>
            <person name="Baxter E.G."/>
            <person name="Helt G."/>
            <person name="Nelson C.R."/>
            <person name="Miklos G.L.G."/>
            <person name="Abril J.F."/>
            <person name="Agbayani A."/>
            <person name="An H.-J."/>
            <person name="Andrews-Pfannkoch C."/>
            <person name="Baldwin D."/>
            <person name="Ballew R.M."/>
            <person name="Basu A."/>
            <person name="Baxendale J."/>
            <person name="Bayraktaroglu L."/>
            <person name="Beasley E.M."/>
            <person name="Beeson K.Y."/>
            <person name="Benos P.V."/>
            <person name="Berman B.P."/>
            <person name="Bhandari D."/>
            <person name="Bolshakov S."/>
            <person name="Borkova D."/>
            <person name="Botchan M.R."/>
            <person name="Bouck J."/>
            <person name="Brokstein P."/>
            <person name="Brottier P."/>
            <person name="Burtis K.C."/>
            <person name="Busam D.A."/>
            <person name="Butler H."/>
            <person name="Cadieu E."/>
            <person name="Center A."/>
            <person name="Chandra I."/>
            <person name="Cherry J.M."/>
            <person name="Cawley S."/>
            <person name="Dahlke C."/>
            <person name="Davenport L.B."/>
            <person name="Davies P."/>
            <person name="de Pablos B."/>
            <person name="Delcher A."/>
            <person name="Deng Z."/>
            <person name="Mays A.D."/>
            <person name="Dew I."/>
            <person name="Dietz S.M."/>
            <person name="Dodson K."/>
            <person name="Doup L.E."/>
            <person name="Downes M."/>
            <person name="Dugan-Rocha S."/>
            <person name="Dunkov B.C."/>
            <person name="Dunn P."/>
            <person name="Durbin K.J."/>
            <person name="Evangelista C.C."/>
            <person name="Ferraz C."/>
            <person name="Ferriera S."/>
            <person name="Fleischmann W."/>
            <person name="Fosler C."/>
            <person name="Gabrielian A.E."/>
            <person name="Garg N.S."/>
            <person name="Gelbart W.M."/>
            <person name="Glasser K."/>
            <person name="Glodek A."/>
            <person name="Gong F."/>
            <person name="Gorrell J.H."/>
            <person name="Gu Z."/>
            <person name="Guan P."/>
            <person name="Harris M."/>
            <person name="Harris N.L."/>
            <person name="Harvey D.A."/>
            <person name="Heiman T.J."/>
            <person name="Hernandez J.R."/>
            <person name="Houck J."/>
            <person name="Hostin D."/>
            <person name="Houston K.A."/>
            <person name="Howland T.J."/>
            <person name="Wei M.-H."/>
            <person name="Ibegwam C."/>
            <person name="Jalali M."/>
            <person name="Kalush F."/>
            <person name="Karpen G.H."/>
            <person name="Ke Z."/>
            <person name="Kennison J.A."/>
            <person name="Ketchum K.A."/>
            <person name="Kimmel B.E."/>
            <person name="Kodira C.D."/>
            <person name="Kraft C.L."/>
            <person name="Kravitz S."/>
            <person name="Kulp D."/>
            <person name="Lai Z."/>
            <person name="Lasko P."/>
            <person name="Lei Y."/>
            <person name="Levitsky A.A."/>
            <person name="Li J.H."/>
            <person name="Li Z."/>
            <person name="Liang Y."/>
            <person name="Lin X."/>
            <person name="Liu X."/>
            <person name="Mattei B."/>
            <person name="McIntosh T.C."/>
            <person name="McLeod M.P."/>
            <person name="McPherson D."/>
            <person name="Merkulov G."/>
            <person name="Milshina N.V."/>
            <person name="Mobarry C."/>
            <person name="Morris J."/>
            <person name="Moshrefi A."/>
            <person name="Mount S.M."/>
            <person name="Moy M."/>
            <person name="Murphy B."/>
            <person name="Murphy L."/>
            <person name="Muzny D.M."/>
            <person name="Nelson D.L."/>
            <person name="Nelson D.R."/>
            <person name="Nelson K.A."/>
            <person name="Nixon K."/>
            <person name="Nusskern D.R."/>
            <person name="Pacleb J.M."/>
            <person name="Palazzolo M."/>
            <person name="Pittman G.S."/>
            <person name="Pan S."/>
            <person name="Pollard J."/>
            <person name="Puri V."/>
            <person name="Reese M.G."/>
            <person name="Reinert K."/>
            <person name="Remington K."/>
            <person name="Saunders R.D.C."/>
            <person name="Scheeler F."/>
            <person name="Shen H."/>
            <person name="Shue B.C."/>
            <person name="Siden-Kiamos I."/>
            <person name="Simpson M."/>
            <person name="Skupski M.P."/>
            <person name="Smith T.J."/>
            <person name="Spier E."/>
            <person name="Spradling A.C."/>
            <person name="Stapleton M."/>
            <person name="Strong R."/>
            <person name="Sun E."/>
            <person name="Svirskas R."/>
            <person name="Tector C."/>
            <person name="Turner R."/>
            <person name="Venter E."/>
            <person name="Wang A.H."/>
            <person name="Wang X."/>
            <person name="Wang Z.-Y."/>
            <person name="Wassarman D.A."/>
            <person name="Weinstock G.M."/>
            <person name="Weissenbach J."/>
            <person name="Williams S.M."/>
            <person name="Woodage T."/>
            <person name="Worley K.C."/>
            <person name="Wu D."/>
            <person name="Yang S."/>
            <person name="Yao Q.A."/>
            <person name="Ye J."/>
            <person name="Yeh R.-F."/>
            <person name="Zaveri J.S."/>
            <person name="Zhan M."/>
            <person name="Zhang G."/>
            <person name="Zhao Q."/>
            <person name="Zheng L."/>
            <person name="Zheng X.H."/>
            <person name="Zhong F.N."/>
            <person name="Zhong W."/>
            <person name="Zhou X."/>
            <person name="Zhu S.C."/>
            <person name="Zhu X."/>
            <person name="Smith H.O."/>
            <person name="Gibbs R.A."/>
            <person name="Myers E.W."/>
            <person name="Rubin G.M."/>
            <person name="Venter J.C."/>
        </authorList>
    </citation>
    <scope>NUCLEOTIDE SEQUENCE [LARGE SCALE GENOMIC DNA]</scope>
    <source>
        <strain>Berkeley</strain>
    </source>
</reference>
<reference key="3">
    <citation type="journal article" date="2002" name="Genome Biol.">
        <title>Annotation of the Drosophila melanogaster euchromatic genome: a systematic review.</title>
        <authorList>
            <person name="Misra S."/>
            <person name="Crosby M.A."/>
            <person name="Mungall C.J."/>
            <person name="Matthews B.B."/>
            <person name="Campbell K.S."/>
            <person name="Hradecky P."/>
            <person name="Huang Y."/>
            <person name="Kaminker J.S."/>
            <person name="Millburn G.H."/>
            <person name="Prochnik S.E."/>
            <person name="Smith C.D."/>
            <person name="Tupy J.L."/>
            <person name="Whitfield E.J."/>
            <person name="Bayraktaroglu L."/>
            <person name="Berman B.P."/>
            <person name="Bettencourt B.R."/>
            <person name="Celniker S.E."/>
            <person name="de Grey A.D.N.J."/>
            <person name="Drysdale R.A."/>
            <person name="Harris N.L."/>
            <person name="Richter J."/>
            <person name="Russo S."/>
            <person name="Schroeder A.J."/>
            <person name="Shu S.Q."/>
            <person name="Stapleton M."/>
            <person name="Yamada C."/>
            <person name="Ashburner M."/>
            <person name="Gelbart W.M."/>
            <person name="Rubin G.M."/>
            <person name="Lewis S.E."/>
        </authorList>
    </citation>
    <scope>GENOME REANNOTATION</scope>
    <source>
        <strain>Berkeley</strain>
    </source>
</reference>
<reference key="4">
    <citation type="journal article" date="2002" name="Genome Biol.">
        <title>A Drosophila full-length cDNA resource.</title>
        <authorList>
            <person name="Stapleton M."/>
            <person name="Carlson J.W."/>
            <person name="Brokstein P."/>
            <person name="Yu C."/>
            <person name="Champe M."/>
            <person name="George R.A."/>
            <person name="Guarin H."/>
            <person name="Kronmiller B."/>
            <person name="Pacleb J.M."/>
            <person name="Park S."/>
            <person name="Wan K.H."/>
            <person name="Rubin G.M."/>
            <person name="Celniker S.E."/>
        </authorList>
    </citation>
    <scope>NUCLEOTIDE SEQUENCE [LARGE SCALE MRNA]</scope>
    <source>
        <strain>Berkeley</strain>
        <tissue>Embryo</tissue>
    </source>
</reference>
<organism>
    <name type="scientific">Drosophila melanogaster</name>
    <name type="common">Fruit fly</name>
    <dbReference type="NCBI Taxonomy" id="7227"/>
    <lineage>
        <taxon>Eukaryota</taxon>
        <taxon>Metazoa</taxon>
        <taxon>Ecdysozoa</taxon>
        <taxon>Arthropoda</taxon>
        <taxon>Hexapoda</taxon>
        <taxon>Insecta</taxon>
        <taxon>Pterygota</taxon>
        <taxon>Neoptera</taxon>
        <taxon>Endopterygota</taxon>
        <taxon>Diptera</taxon>
        <taxon>Brachycera</taxon>
        <taxon>Muscomorpha</taxon>
        <taxon>Ephydroidea</taxon>
        <taxon>Drosophilidae</taxon>
        <taxon>Drosophila</taxon>
        <taxon>Sophophora</taxon>
    </lineage>
</organism>
<sequence length="276" mass="31363">MSEMQMDCALDLMRRLPPQQIEKNLIDLIDLAPDLCEDLLSSVDQPLKIAKDKEHGKDYLLCDYNRDGDSYRSPWSNSYYPPLEDGQMPSERLRKLEIEANYAFDQYREMYYEGGVSSVYLWDLDHGFAAVILIKKAGDGSKMIRGCWDSIHVVEVQEKTTGRTAHYKLTSTAMLWLQTNKQGSGTMNLGGSLTRQQEQDANVSESSPHIANIGKMVEEMENKIRNTLNEIYFGKTKDIVNGLRSTQSLADQRQQAAMKQDLAAAILRRNVKPESN</sequence>
<accession>P48603</accession>
<accession>Q9VQ33</accession>
<proteinExistence type="evidence at protein level"/>
<name>CAPZB_DROME</name>
<comment type="function">
    <text evidence="1 2">F-actin-capping proteins bind in a Ca(2+)-independent manner to the fast growing ends of actin filaments (barbed end) thereby blocking the exchange of subunits at these ends. Unlike other capping proteins (such as gelsolin and severin), these proteins do not sever actin filaments. Forms, with CAPZB, the barbed end of the fast growing ends of actin filaments in the dynactin complex and stabilizes dynactin structure. The dynactin multiprotein complex activates the molecular motor dynein for ultra-processive transport along microtubules (By similarity).</text>
</comment>
<comment type="subunit">
    <text evidence="1">Component of the F-actin capping complex, composed of a heterodimer of an alpha and a beta subunit (By similarity). Subunit of dynactin, a multiprotein complex part of a tripartite complex with dynein and a adapter, such as BICDL1, BICD2 or HOOK3 (By similarity).</text>
</comment>
<comment type="interaction">
    <interactant intactId="EBI-95160">
        <id>P48603</id>
    </interactant>
    <interactant intactId="EBI-173404">
        <id>Q9W2N0</id>
        <label>cpa</label>
    </interactant>
    <organismsDiffer>false</organismsDiffer>
    <experiments>3</experiments>
</comment>
<comment type="subcellular location">
    <subcellularLocation>
        <location evidence="1">Cytoplasm</location>
        <location evidence="1">Cytoskeleton</location>
    </subcellularLocation>
</comment>
<comment type="similarity">
    <text evidence="3">Belongs to the F-actin-capping protein beta subunit family.</text>
</comment>